<name>BAT1_ORYSJ</name>
<proteinExistence type="evidence at transcript level"/>
<keyword id="KW-0029">Amino-acid transport</keyword>
<keyword id="KW-0472">Membrane</keyword>
<keyword id="KW-1185">Reference proteome</keyword>
<keyword id="KW-0812">Transmembrane</keyword>
<keyword id="KW-1133">Transmembrane helix</keyword>
<keyword id="KW-0813">Transport</keyword>
<evidence type="ECO:0000250" key="1"/>
<evidence type="ECO:0000255" key="2"/>
<evidence type="ECO:0000305" key="3"/>
<gene>
    <name type="primary">BAT1</name>
    <name type="ordered locus">Os01g0607200</name>
    <name type="ordered locus">LOC_Os01g42234</name>
    <name type="ORF">OsJ_02547</name>
</gene>
<accession>B9EXZ6</accession>
<accession>A0A0P0V558</accession>
<accession>Q0JLD5</accession>
<reference key="1">
    <citation type="journal article" date="2005" name="Nature">
        <title>The map-based sequence of the rice genome.</title>
        <authorList>
            <consortium name="International rice genome sequencing project (IRGSP)"/>
        </authorList>
    </citation>
    <scope>NUCLEOTIDE SEQUENCE [LARGE SCALE GENOMIC DNA]</scope>
    <source>
        <strain>cv. Nipponbare</strain>
    </source>
</reference>
<reference key="2">
    <citation type="journal article" date="2008" name="Nucleic Acids Res.">
        <title>The rice annotation project database (RAP-DB): 2008 update.</title>
        <authorList>
            <consortium name="The rice annotation project (RAP)"/>
        </authorList>
    </citation>
    <scope>GENOME REANNOTATION</scope>
    <source>
        <strain>cv. Nipponbare</strain>
    </source>
</reference>
<reference key="3">
    <citation type="journal article" date="2013" name="Rice">
        <title>Improvement of the Oryza sativa Nipponbare reference genome using next generation sequence and optical map data.</title>
        <authorList>
            <person name="Kawahara Y."/>
            <person name="de la Bastide M."/>
            <person name="Hamilton J.P."/>
            <person name="Kanamori H."/>
            <person name="McCombie W.R."/>
            <person name="Ouyang S."/>
            <person name="Schwartz D.C."/>
            <person name="Tanaka T."/>
            <person name="Wu J."/>
            <person name="Zhou S."/>
            <person name="Childs K.L."/>
            <person name="Davidson R.M."/>
            <person name="Lin H."/>
            <person name="Quesada-Ocampo L."/>
            <person name="Vaillancourt B."/>
            <person name="Sakai H."/>
            <person name="Lee S.S."/>
            <person name="Kim J."/>
            <person name="Numa H."/>
            <person name="Itoh T."/>
            <person name="Buell C.R."/>
            <person name="Matsumoto T."/>
        </authorList>
    </citation>
    <scope>GENOME REANNOTATION</scope>
    <source>
        <strain>cv. Nipponbare</strain>
    </source>
</reference>
<reference key="4">
    <citation type="journal article" date="2005" name="PLoS Biol.">
        <title>The genomes of Oryza sativa: a history of duplications.</title>
        <authorList>
            <person name="Yu J."/>
            <person name="Wang J."/>
            <person name="Lin W."/>
            <person name="Li S."/>
            <person name="Li H."/>
            <person name="Zhou J."/>
            <person name="Ni P."/>
            <person name="Dong W."/>
            <person name="Hu S."/>
            <person name="Zeng C."/>
            <person name="Zhang J."/>
            <person name="Zhang Y."/>
            <person name="Li R."/>
            <person name="Xu Z."/>
            <person name="Li S."/>
            <person name="Li X."/>
            <person name="Zheng H."/>
            <person name="Cong L."/>
            <person name="Lin L."/>
            <person name="Yin J."/>
            <person name="Geng J."/>
            <person name="Li G."/>
            <person name="Shi J."/>
            <person name="Liu J."/>
            <person name="Lv H."/>
            <person name="Li J."/>
            <person name="Wang J."/>
            <person name="Deng Y."/>
            <person name="Ran L."/>
            <person name="Shi X."/>
            <person name="Wang X."/>
            <person name="Wu Q."/>
            <person name="Li C."/>
            <person name="Ren X."/>
            <person name="Wang J."/>
            <person name="Wang X."/>
            <person name="Li D."/>
            <person name="Liu D."/>
            <person name="Zhang X."/>
            <person name="Ji Z."/>
            <person name="Zhao W."/>
            <person name="Sun Y."/>
            <person name="Zhang Z."/>
            <person name="Bao J."/>
            <person name="Han Y."/>
            <person name="Dong L."/>
            <person name="Ji J."/>
            <person name="Chen P."/>
            <person name="Wu S."/>
            <person name="Liu J."/>
            <person name="Xiao Y."/>
            <person name="Bu D."/>
            <person name="Tan J."/>
            <person name="Yang L."/>
            <person name="Ye C."/>
            <person name="Zhang J."/>
            <person name="Xu J."/>
            <person name="Zhou Y."/>
            <person name="Yu Y."/>
            <person name="Zhang B."/>
            <person name="Zhuang S."/>
            <person name="Wei H."/>
            <person name="Liu B."/>
            <person name="Lei M."/>
            <person name="Yu H."/>
            <person name="Li Y."/>
            <person name="Xu H."/>
            <person name="Wei S."/>
            <person name="He X."/>
            <person name="Fang L."/>
            <person name="Zhang Z."/>
            <person name="Zhang Y."/>
            <person name="Huang X."/>
            <person name="Su Z."/>
            <person name="Tong W."/>
            <person name="Li J."/>
            <person name="Tong Z."/>
            <person name="Li S."/>
            <person name="Ye J."/>
            <person name="Wang L."/>
            <person name="Fang L."/>
            <person name="Lei T."/>
            <person name="Chen C.-S."/>
            <person name="Chen H.-C."/>
            <person name="Xu Z."/>
            <person name="Li H."/>
            <person name="Huang H."/>
            <person name="Zhang F."/>
            <person name="Xu H."/>
            <person name="Li N."/>
            <person name="Zhao C."/>
            <person name="Li S."/>
            <person name="Dong L."/>
            <person name="Huang Y."/>
            <person name="Li L."/>
            <person name="Xi Y."/>
            <person name="Qi Q."/>
            <person name="Li W."/>
            <person name="Zhang B."/>
            <person name="Hu W."/>
            <person name="Zhang Y."/>
            <person name="Tian X."/>
            <person name="Jiao Y."/>
            <person name="Liang X."/>
            <person name="Jin J."/>
            <person name="Gao L."/>
            <person name="Zheng W."/>
            <person name="Hao B."/>
            <person name="Liu S.-M."/>
            <person name="Wang W."/>
            <person name="Yuan L."/>
            <person name="Cao M."/>
            <person name="McDermott J."/>
            <person name="Samudrala R."/>
            <person name="Wang J."/>
            <person name="Wong G.K.-S."/>
            <person name="Yang H."/>
        </authorList>
    </citation>
    <scope>NUCLEOTIDE SEQUENCE [LARGE SCALE GENOMIC DNA]</scope>
    <source>
        <strain>cv. Nipponbare</strain>
    </source>
</reference>
<reference key="5">
    <citation type="journal article" date="2003" name="Science">
        <title>Collection, mapping, and annotation of over 28,000 cDNA clones from japonica rice.</title>
        <authorList>
            <consortium name="The rice full-length cDNA consortium"/>
        </authorList>
    </citation>
    <scope>NUCLEOTIDE SEQUENCE [LARGE SCALE MRNA]</scope>
    <source>
        <strain>cv. Nipponbare</strain>
    </source>
</reference>
<organism>
    <name type="scientific">Oryza sativa subsp. japonica</name>
    <name type="common">Rice</name>
    <dbReference type="NCBI Taxonomy" id="39947"/>
    <lineage>
        <taxon>Eukaryota</taxon>
        <taxon>Viridiplantae</taxon>
        <taxon>Streptophyta</taxon>
        <taxon>Embryophyta</taxon>
        <taxon>Tracheophyta</taxon>
        <taxon>Spermatophyta</taxon>
        <taxon>Magnoliopsida</taxon>
        <taxon>Liliopsida</taxon>
        <taxon>Poales</taxon>
        <taxon>Poaceae</taxon>
        <taxon>BOP clade</taxon>
        <taxon>Oryzoideae</taxon>
        <taxon>Oryzeae</taxon>
        <taxon>Oryzinae</taxon>
        <taxon>Oryza</taxon>
        <taxon>Oryza sativa</taxon>
    </lineage>
</organism>
<feature type="chain" id="PRO_0000418907" description="Amino-acid permease BAT1 homolog">
    <location>
        <begin position="1"/>
        <end position="520"/>
    </location>
</feature>
<feature type="transmembrane region" description="Helical" evidence="2">
    <location>
        <begin position="39"/>
        <end position="59"/>
    </location>
</feature>
<feature type="transmembrane region" description="Helical" evidence="2">
    <location>
        <begin position="74"/>
        <end position="94"/>
    </location>
</feature>
<feature type="transmembrane region" description="Helical" evidence="2">
    <location>
        <begin position="118"/>
        <end position="138"/>
    </location>
</feature>
<feature type="transmembrane region" description="Helical" evidence="2">
    <location>
        <begin position="168"/>
        <end position="188"/>
    </location>
</feature>
<feature type="transmembrane region" description="Helical" evidence="2">
    <location>
        <begin position="193"/>
        <end position="213"/>
    </location>
</feature>
<feature type="transmembrane region" description="Helical" evidence="2">
    <location>
        <begin position="236"/>
        <end position="256"/>
    </location>
</feature>
<feature type="transmembrane region" description="Helical" evidence="2">
    <location>
        <begin position="278"/>
        <end position="298"/>
    </location>
</feature>
<feature type="transmembrane region" description="Helical" evidence="2">
    <location>
        <begin position="334"/>
        <end position="354"/>
    </location>
</feature>
<feature type="transmembrane region" description="Helical" evidence="2">
    <location>
        <begin position="387"/>
        <end position="407"/>
    </location>
</feature>
<feature type="transmembrane region" description="Helical" evidence="2">
    <location>
        <begin position="410"/>
        <end position="430"/>
    </location>
</feature>
<feature type="transmembrane region" description="Helical" evidence="2">
    <location>
        <begin position="454"/>
        <end position="474"/>
    </location>
</feature>
<feature type="transmembrane region" description="Helical" evidence="2">
    <location>
        <begin position="487"/>
        <end position="507"/>
    </location>
</feature>
<feature type="sequence conflict" description="In Ref. 5; AK105656." evidence="3" ref="5">
    <original>I</original>
    <variation>T</variation>
    <location>
        <position position="389"/>
    </location>
</feature>
<feature type="sequence conflict" description="In Ref. 5; AK105656." evidence="3" ref="5">
    <original>V</original>
    <variation>A</variation>
    <location>
        <position position="455"/>
    </location>
</feature>
<feature type="sequence conflict" description="In Ref. 5; AK105656." evidence="3" ref="5">
    <original>T</original>
    <variation>I</variation>
    <location>
        <position position="481"/>
    </location>
</feature>
<sequence>MTWNKAPAADAEAGGGGDTGHARLRELGYKQELKRDLSVLSNFAFSFSIISVLTGITTLYNTGLSFGGPATMTFGWFVAGAFTMTVGLSMAEICSSFPTSGGLYYWSARLSGKRWAPFASWITGWFNIVGQWAVTTSVDFSLAQLIQVIILLSTGGNNGGGYMASKYVVIAFHAAILLSHAAINSLPITWLSFFGQFAAAWNMLGVFVLMIAVPTVATERASAKFVFTHFNTENNAGIHSNFYIFVLGLLMSQYTLTGYDASAHMTEETKNADRNGPIGIISAIGISIIVGWGYILGITFAVKDIPYLLNPENDAGGYAIAEVFYLAFKSRYGSGIGGIICLGIVAVAIYFCGMSSVTSNSRMAYAFSRDGAMPLSSVWHKVNKHEVPINAVWLSALISLCMALPSLGSLVAFQAMVSIATIGLYVAYALPILFRVTLARKHFVPGPFNLGRCGVAVGWAAVLWVATITVLFSLPVSYPVTKDTLNYTPVAVGGLFLLVLSSWLLSARHWFKGPITNLDG</sequence>
<protein>
    <recommendedName>
        <fullName>Amino-acid permease BAT1 homolog</fullName>
    </recommendedName>
</protein>
<dbReference type="EMBL" id="AP008207">
    <property type="protein sequence ID" value="BAF05443.2"/>
    <property type="status" value="ALT_SEQ"/>
    <property type="molecule type" value="Genomic_DNA"/>
</dbReference>
<dbReference type="EMBL" id="AP014957">
    <property type="protein sequence ID" value="BAS73082.1"/>
    <property type="molecule type" value="Genomic_DNA"/>
</dbReference>
<dbReference type="EMBL" id="CM000138">
    <property type="protein sequence ID" value="EEE54959.1"/>
    <property type="molecule type" value="Genomic_DNA"/>
</dbReference>
<dbReference type="EMBL" id="AK105656">
    <property type="status" value="NOT_ANNOTATED_CDS"/>
    <property type="molecule type" value="mRNA"/>
</dbReference>
<dbReference type="RefSeq" id="XP_015622188.1">
    <property type="nucleotide sequence ID" value="XM_015766702.1"/>
</dbReference>
<dbReference type="RefSeq" id="XP_015622189.1">
    <property type="nucleotide sequence ID" value="XM_015766703.1"/>
</dbReference>
<dbReference type="SMR" id="B9EXZ6"/>
<dbReference type="FunCoup" id="B9EXZ6">
    <property type="interactions" value="139"/>
</dbReference>
<dbReference type="STRING" id="39947.B9EXZ6"/>
<dbReference type="PaxDb" id="39947-B9EXZ6"/>
<dbReference type="EnsemblPlants" id="Os01t0607200-02">
    <property type="protein sequence ID" value="Os01t0607200-02"/>
    <property type="gene ID" value="Os01g0607200"/>
</dbReference>
<dbReference type="Gramene" id="Os01t0607200-02">
    <property type="protein sequence ID" value="Os01t0607200-02"/>
    <property type="gene ID" value="Os01g0607200"/>
</dbReference>
<dbReference type="KEGG" id="dosa:Os01g0607200"/>
<dbReference type="eggNOG" id="KOG1289">
    <property type="taxonomic scope" value="Eukaryota"/>
</dbReference>
<dbReference type="HOGENOM" id="CLU_004495_0_2_1"/>
<dbReference type="InParanoid" id="B9EXZ6"/>
<dbReference type="OrthoDB" id="3257095at2759"/>
<dbReference type="Proteomes" id="UP000000763">
    <property type="component" value="Chromosome 1"/>
</dbReference>
<dbReference type="Proteomes" id="UP000007752">
    <property type="component" value="Chromosome 1"/>
</dbReference>
<dbReference type="Proteomes" id="UP000059680">
    <property type="component" value="Chromosome 1"/>
</dbReference>
<dbReference type="ExpressionAtlas" id="B9EXZ6">
    <property type="expression patterns" value="baseline and differential"/>
</dbReference>
<dbReference type="GO" id="GO:0016020">
    <property type="term" value="C:membrane"/>
    <property type="evidence" value="ECO:0007669"/>
    <property type="project" value="UniProtKB-SubCell"/>
</dbReference>
<dbReference type="GO" id="GO:0015185">
    <property type="term" value="F:gamma-aminobutyric acid transmembrane transporter activity"/>
    <property type="evidence" value="ECO:0000318"/>
    <property type="project" value="GO_Central"/>
</dbReference>
<dbReference type="GO" id="GO:0015180">
    <property type="term" value="F:L-alanine transmembrane transporter activity"/>
    <property type="evidence" value="ECO:0000318"/>
    <property type="project" value="GO_Central"/>
</dbReference>
<dbReference type="GO" id="GO:0005313">
    <property type="term" value="F:L-glutamate transmembrane transporter activity"/>
    <property type="evidence" value="ECO:0000318"/>
    <property type="project" value="GO_Central"/>
</dbReference>
<dbReference type="GO" id="GO:0015189">
    <property type="term" value="F:L-lysine transmembrane transporter activity"/>
    <property type="evidence" value="ECO:0000318"/>
    <property type="project" value="GO_Central"/>
</dbReference>
<dbReference type="GO" id="GO:0015812">
    <property type="term" value="P:gamma-aminobutyric acid transport"/>
    <property type="evidence" value="ECO:0000318"/>
    <property type="project" value="GO_Central"/>
</dbReference>
<dbReference type="FunFam" id="1.20.1740.10:FF:000026">
    <property type="entry name" value="Amino-acid permease BAT1"/>
    <property type="match status" value="1"/>
</dbReference>
<dbReference type="Gene3D" id="1.20.1740.10">
    <property type="entry name" value="Amino acid/polyamine transporter I"/>
    <property type="match status" value="1"/>
</dbReference>
<dbReference type="InterPro" id="IPR002293">
    <property type="entry name" value="AA/rel_permease1"/>
</dbReference>
<dbReference type="InterPro" id="IPR004756">
    <property type="entry name" value="AA_permease"/>
</dbReference>
<dbReference type="NCBIfam" id="TIGR00907">
    <property type="entry name" value="2A0304"/>
    <property type="match status" value="1"/>
</dbReference>
<dbReference type="PANTHER" id="PTHR45649">
    <property type="entry name" value="AMINO-ACID PERMEASE BAT1"/>
    <property type="match status" value="1"/>
</dbReference>
<dbReference type="PANTHER" id="PTHR45649:SF30">
    <property type="entry name" value="AMINO-ACID PERMEASE BAT1"/>
    <property type="match status" value="1"/>
</dbReference>
<dbReference type="Pfam" id="PF13520">
    <property type="entry name" value="AA_permease_2"/>
    <property type="match status" value="1"/>
</dbReference>
<dbReference type="PIRSF" id="PIRSF006060">
    <property type="entry name" value="AA_transporter"/>
    <property type="match status" value="1"/>
</dbReference>
<comment type="function">
    <text evidence="1">May be involved in the transport of amino acids.</text>
</comment>
<comment type="subcellular location">
    <subcellularLocation>
        <location evidence="1">Membrane</location>
        <topology evidence="3">Multi-pass membrane protein</topology>
    </subcellularLocation>
</comment>
<comment type="similarity">
    <text evidence="3">Belongs to the amino acid-polyamine-organocation (APC) superfamily. Amino acid/choline transporter (ACT) (TC 2.A.3.4) family.</text>
</comment>
<comment type="sequence caution" evidence="3">
    <conflict type="erroneous termination">
        <sequence resource="EMBL" id="AK105656"/>
    </conflict>
    <text>Truncated C-terminus.</text>
</comment>
<comment type="sequence caution" evidence="3">
    <conflict type="erroneous gene model prediction">
        <sequence resource="EMBL-CDS" id="BAF05443"/>
    </conflict>
</comment>